<reference key="1">
    <citation type="journal article" date="2008" name="Nature">
        <title>The genome of the simian and human malaria parasite Plasmodium knowlesi.</title>
        <authorList>
            <person name="Pain A."/>
            <person name="Boehme U."/>
            <person name="Berry A.E."/>
            <person name="Mungall K."/>
            <person name="Finn R.D."/>
            <person name="Jackson A.P."/>
            <person name="Mourier T."/>
            <person name="Mistry J."/>
            <person name="Pasini E.M."/>
            <person name="Aslett M.A."/>
            <person name="Balasubrammaniam S."/>
            <person name="Borgwardt K."/>
            <person name="Brooks K."/>
            <person name="Carret C."/>
            <person name="Carver T.J."/>
            <person name="Cherevach I."/>
            <person name="Chillingworth T."/>
            <person name="Clark T.G."/>
            <person name="Galinski M.R."/>
            <person name="Hall N."/>
            <person name="Harper D."/>
            <person name="Harris D."/>
            <person name="Hauser H."/>
            <person name="Ivens A."/>
            <person name="Janssen C.S."/>
            <person name="Keane T."/>
            <person name="Larke N."/>
            <person name="Lapp S."/>
            <person name="Marti M."/>
            <person name="Moule S."/>
            <person name="Meyer I.M."/>
            <person name="Ormond D."/>
            <person name="Peters N."/>
            <person name="Sanders M."/>
            <person name="Sanders S."/>
            <person name="Sargeant T.J."/>
            <person name="Simmonds M."/>
            <person name="Smith F."/>
            <person name="Squares R."/>
            <person name="Thurston S."/>
            <person name="Tivey A.R."/>
            <person name="Walker D."/>
            <person name="White B."/>
            <person name="Zuiderwijk E."/>
            <person name="Churcher C."/>
            <person name="Quail M.A."/>
            <person name="Cowman A.F."/>
            <person name="Turner C.M.R."/>
            <person name="Rajandream M.A."/>
            <person name="Kocken C.H.M."/>
            <person name="Thomas A.W."/>
            <person name="Newbold C.I."/>
            <person name="Barrell B.G."/>
            <person name="Berriman M."/>
        </authorList>
    </citation>
    <scope>NUCLEOTIDE SEQUENCE [LARGE SCALE GENOMIC DNA]</scope>
    <source>
        <strain>H</strain>
    </source>
</reference>
<comment type="function">
    <text evidence="1">Probable GTP-binding protein involved in generating and maintaining the structure of the tubular endoplasmic reticulum network.</text>
</comment>
<comment type="subcellular location">
    <subcellularLocation>
        <location evidence="2">Endoplasmic reticulum membrane</location>
        <topology evidence="2">Multi-pass membrane protein</topology>
    </subcellularLocation>
</comment>
<comment type="similarity">
    <text evidence="3">Belongs to the TRAFAC class dynamin-like GTPase superfamily. GB1/RHD3 GTPase family. RHD3 subfamily.</text>
</comment>
<protein>
    <recommendedName>
        <fullName evidence="2">Protein SEY1 homolog</fullName>
        <ecNumber evidence="2">3.6.5.-</ecNumber>
    </recommendedName>
</protein>
<evidence type="ECO:0000250" key="1">
    <source>
        <dbReference type="UniProtKB" id="A0A509AN59"/>
    </source>
</evidence>
<evidence type="ECO:0000255" key="2">
    <source>
        <dbReference type="HAMAP-Rule" id="MF_03109"/>
    </source>
</evidence>
<evidence type="ECO:0000255" key="3">
    <source>
        <dbReference type="PROSITE-ProRule" id="PRU01052"/>
    </source>
</evidence>
<sequence length="883" mass="102015">MQMDRKTQIIDYDGNMIADLKEWMIRNKLANLGFNYNVVAILGSQSSGKSTLLNNLFKTSFDVMNTKLGHSQTTQGLWLSFDTFEESPVSPLEKGNSTTPINPTLILDVEGNDSKERGDNRLTFEHRSALFSLALADCLIVNLWYHSLGNFTASNYGLLKTVMEVNLELFQQDKNCPKTILLFTVRDWFEEFASIDIVKNKIVEEYLNKIWAEMKKPPSAKKANINNYFIVEVVGLSHAIIKKTEFLNDVENLRKKWINELRPLQYSRNIPSDGFAHYCNNIWNTIVKQSQLDIPSQKEMLATFRCQEIKNNVISNTSKMIKEKLTASSSQPTSASIDEFKSWAEKDIVEKSLDEYFVDASRYTESICLKTSEELLESLFIQLQTIVDNNLNFTQRVLSAKFANELNTMYSVCTSDKNVFLFSKESNLQVHKDGNGSNSSKEDKKDENTSQDKCIRLWSSFLSNADKLEYITFCNFFESYQKCNIEIRKKNKIHEFNYKPSLNILLTSICKDMNRIRNTQFTVLLERTRATIKSRFKNMDNLLITTKNPEEYWNHTLKIVKALQESINNNLTKCFINLKGGGPGSSVAGISNELFDHDEDNTFHVDSPSEGHRSISDNRTAHENKHYVDENLLNYKKIDIIKNKGKYISSVSEEIDKQIKNKKAISELNNYYLDEIMDVLKSKLDEISDNLSSIIIQRFESVFNYDDAEQPRHWREISMAELKKIFRESKNYAFLIIDILQKNIKVELIDDYLPNNFIKDEVIEKGKNKAKRKIQEICRDAQYIQETGGKMSLKNVPLFFWVILLILGWNELLFFIRFFFRLNIILPLFLAAAVILSTLFFNGNMEVLSTINKVVFFLAKSSFGFYRQLQTMGEKVAQVPTAD</sequence>
<feature type="chain" id="PRO_0000384956" description="Protein SEY1 homolog">
    <location>
        <begin position="1"/>
        <end position="883"/>
    </location>
</feature>
<feature type="topological domain" description="Cytoplasmic" evidence="2">
    <location>
        <begin position="1"/>
        <end position="795"/>
    </location>
</feature>
<feature type="transmembrane region" description="Helical" evidence="2">
    <location>
        <begin position="796"/>
        <end position="816"/>
    </location>
</feature>
<feature type="topological domain" description="Lumenal" evidence="2">
    <location>
        <begin position="817"/>
        <end position="819"/>
    </location>
</feature>
<feature type="transmembrane region" description="Helical" evidence="2">
    <location>
        <begin position="820"/>
        <end position="840"/>
    </location>
</feature>
<feature type="topological domain" description="Cytoplasmic" evidence="2">
    <location>
        <begin position="841"/>
        <end position="883"/>
    </location>
</feature>
<feature type="domain" description="GB1/RHD3-type G" evidence="3">
    <location>
        <begin position="33"/>
        <end position="279"/>
    </location>
</feature>
<feature type="coiled-coil region" evidence="2">
    <location>
        <begin position="673"/>
        <end position="693"/>
    </location>
</feature>
<feature type="binding site" evidence="2">
    <location>
        <begin position="43"/>
        <end position="50"/>
    </location>
    <ligand>
        <name>GTP</name>
        <dbReference type="ChEBI" id="CHEBI:37565"/>
    </ligand>
</feature>
<gene>
    <name evidence="1" type="primary">SEY1</name>
    <name type="ORF">PKH_133110</name>
</gene>
<accession>B3LAJ9</accession>
<name>SEY1_PLAKH</name>
<proteinExistence type="inferred from homology"/>
<organism>
    <name type="scientific">Plasmodium knowlesi (strain H)</name>
    <dbReference type="NCBI Taxonomy" id="5851"/>
    <lineage>
        <taxon>Eukaryota</taxon>
        <taxon>Sar</taxon>
        <taxon>Alveolata</taxon>
        <taxon>Apicomplexa</taxon>
        <taxon>Aconoidasida</taxon>
        <taxon>Haemosporida</taxon>
        <taxon>Plasmodiidae</taxon>
        <taxon>Plasmodium</taxon>
        <taxon>Plasmodium (Plasmodium)</taxon>
    </lineage>
</organism>
<keyword id="KW-0175">Coiled coil</keyword>
<keyword id="KW-0256">Endoplasmic reticulum</keyword>
<keyword id="KW-0342">GTP-binding</keyword>
<keyword id="KW-0378">Hydrolase</keyword>
<keyword id="KW-0472">Membrane</keyword>
<keyword id="KW-0547">Nucleotide-binding</keyword>
<keyword id="KW-1185">Reference proteome</keyword>
<keyword id="KW-0812">Transmembrane</keyword>
<keyword id="KW-1133">Transmembrane helix</keyword>
<dbReference type="EC" id="3.6.5.-" evidence="2"/>
<dbReference type="EMBL" id="AM910995">
    <property type="protein sequence ID" value="CAQ42803.1"/>
    <property type="molecule type" value="Genomic_DNA"/>
</dbReference>
<dbReference type="RefSeq" id="XP_002260831.1">
    <property type="nucleotide sequence ID" value="XM_002260795.1"/>
</dbReference>
<dbReference type="SMR" id="B3LAJ9"/>
<dbReference type="FunCoup" id="B3LAJ9">
    <property type="interactions" value="5"/>
</dbReference>
<dbReference type="STRING" id="5851.B3LAJ9"/>
<dbReference type="EnsemblProtists" id="CAQ42803">
    <property type="protein sequence ID" value="CAQ42803"/>
    <property type="gene ID" value="PKH_133110"/>
</dbReference>
<dbReference type="GeneID" id="7322988"/>
<dbReference type="KEGG" id="pkn:PKNH_1342000"/>
<dbReference type="VEuPathDB" id="PlasmoDB:PKNH_1342000"/>
<dbReference type="HOGENOM" id="CLU_312978_0_0_1"/>
<dbReference type="InParanoid" id="B3LAJ9"/>
<dbReference type="OMA" id="WREISMA"/>
<dbReference type="OrthoDB" id="1597724at2759"/>
<dbReference type="PhylomeDB" id="B3LAJ9"/>
<dbReference type="Proteomes" id="UP000031513">
    <property type="component" value="Chromosome 13"/>
</dbReference>
<dbReference type="GO" id="GO:0005789">
    <property type="term" value="C:endoplasmic reticulum membrane"/>
    <property type="evidence" value="ECO:0007669"/>
    <property type="project" value="UniProtKB-SubCell"/>
</dbReference>
<dbReference type="GO" id="GO:0005525">
    <property type="term" value="F:GTP binding"/>
    <property type="evidence" value="ECO:0007669"/>
    <property type="project" value="UniProtKB-UniRule"/>
</dbReference>
<dbReference type="GO" id="GO:0003924">
    <property type="term" value="F:GTPase activity"/>
    <property type="evidence" value="ECO:0007669"/>
    <property type="project" value="UniProtKB-UniRule"/>
</dbReference>
<dbReference type="GO" id="GO:0016320">
    <property type="term" value="P:endoplasmic reticulum membrane fusion"/>
    <property type="evidence" value="ECO:0007669"/>
    <property type="project" value="TreeGrafter"/>
</dbReference>
<dbReference type="CDD" id="cd01851">
    <property type="entry name" value="GBP"/>
    <property type="match status" value="1"/>
</dbReference>
<dbReference type="FunFam" id="3.40.50.300:FF:000727">
    <property type="entry name" value="Protein SEY1 homolog"/>
    <property type="match status" value="1"/>
</dbReference>
<dbReference type="Gene3D" id="3.40.50.300">
    <property type="entry name" value="P-loop containing nucleotide triphosphate hydrolases"/>
    <property type="match status" value="1"/>
</dbReference>
<dbReference type="HAMAP" id="MF_03109">
    <property type="entry name" value="Sey1"/>
    <property type="match status" value="1"/>
</dbReference>
<dbReference type="InterPro" id="IPR030386">
    <property type="entry name" value="G_GB1_RHD3_dom"/>
</dbReference>
<dbReference type="InterPro" id="IPR027417">
    <property type="entry name" value="P-loop_NTPase"/>
</dbReference>
<dbReference type="InterPro" id="IPR008803">
    <property type="entry name" value="RHD3/Sey1"/>
</dbReference>
<dbReference type="InterPro" id="IPR046758">
    <property type="entry name" value="Sey1/RHD3-like_3HB"/>
</dbReference>
<dbReference type="PANTHER" id="PTHR45923">
    <property type="entry name" value="PROTEIN SEY1"/>
    <property type="match status" value="1"/>
</dbReference>
<dbReference type="PANTHER" id="PTHR45923:SF2">
    <property type="entry name" value="PROTEIN SEY1"/>
    <property type="match status" value="1"/>
</dbReference>
<dbReference type="Pfam" id="PF05879">
    <property type="entry name" value="RHD3_GTPase"/>
    <property type="match status" value="1"/>
</dbReference>
<dbReference type="Pfam" id="PF20428">
    <property type="entry name" value="Sey1_3HB"/>
    <property type="match status" value="1"/>
</dbReference>
<dbReference type="SUPFAM" id="SSF52540">
    <property type="entry name" value="P-loop containing nucleoside triphosphate hydrolases"/>
    <property type="match status" value="1"/>
</dbReference>
<dbReference type="PROSITE" id="PS51715">
    <property type="entry name" value="G_GB1_RHD3"/>
    <property type="match status" value="1"/>
</dbReference>